<keyword id="KW-0012">Acyltransferase</keyword>
<keyword id="KW-0046">Antibiotic resistance</keyword>
<keyword id="KW-0133">Cell shape</keyword>
<keyword id="KW-0961">Cell wall biogenesis/degradation</keyword>
<keyword id="KW-0963">Cytoplasm</keyword>
<keyword id="KW-0573">Peptidoglycan synthesis</keyword>
<keyword id="KW-0808">Transferase</keyword>
<accession>Q8NVA9</accession>
<comment type="function">
    <text evidence="1">Catalyzes the incorporation of the first glycine of the pentaglycine interpeptide bridge, which is characteristic of the S.aureus peptidoglycan. This glycine is added to the epsilon-amino group of the L-lysine of the membrane-bound lipid II intermediate (GlcNAc-(beta-1,4)-N-acetylmuramic acid(-L-Ala-D-iGln-L-Lys-D-Ala-D-Ala)-pyrophosphoryl-undecaprenol), using glycyl-tRNA(Gly) as donor, in a ribosome-independent mechanism. Involved in methicillin resistance (By similarity).</text>
</comment>
<comment type="catalytic activity">
    <reaction>
        <text>beta-D-GlcNAc-(1-&gt;4)-Mur2Ac(oyl-L-Ala-D-isoglutaminyl-L-Lys-D-Ala-D-Ala)-di-trans,octa-cis-undecaprenyl diphosphate + glycyl-tRNA(Gly) = beta-D-GlcNAc-(1-&gt;4)-Mur2Ac(oyl-L-Ala-D-isoglutaminyl-L-Lys-(N(6)-Gly)-D-Ala-D-Ala)-di-trans,octa-cis-undecaprenyl diphosphate + tRNA(Gly) + H(+)</text>
        <dbReference type="Rhea" id="RHEA:30435"/>
        <dbReference type="Rhea" id="RHEA-COMP:9664"/>
        <dbReference type="Rhea" id="RHEA-COMP:9683"/>
        <dbReference type="ChEBI" id="CHEBI:15378"/>
        <dbReference type="ChEBI" id="CHEBI:62233"/>
        <dbReference type="ChEBI" id="CHEBI:62234"/>
        <dbReference type="ChEBI" id="CHEBI:78442"/>
        <dbReference type="ChEBI" id="CHEBI:78522"/>
        <dbReference type="EC" id="2.3.2.16"/>
    </reaction>
</comment>
<comment type="subunit">
    <text evidence="1">Monomer.</text>
</comment>
<comment type="subcellular location">
    <subcellularLocation>
        <location evidence="2">Cytoplasm</location>
    </subcellularLocation>
</comment>
<comment type="similarity">
    <text evidence="2">Belongs to the FemABX family.</text>
</comment>
<protein>
    <recommendedName>
        <fullName>Lipid II:glycine glycyltransferase</fullName>
        <ecNumber>2.3.2.16</ecNumber>
    </recommendedName>
    <alternativeName>
        <fullName>Factor essential for expression of methicillin resistance X</fullName>
    </alternativeName>
</protein>
<reference key="1">
    <citation type="journal article" date="2002" name="Lancet">
        <title>Genome and virulence determinants of high virulence community-acquired MRSA.</title>
        <authorList>
            <person name="Baba T."/>
            <person name="Takeuchi F."/>
            <person name="Kuroda M."/>
            <person name="Yuzawa H."/>
            <person name="Aoki K."/>
            <person name="Oguchi A."/>
            <person name="Nagai Y."/>
            <person name="Iwama N."/>
            <person name="Asano K."/>
            <person name="Naimi T."/>
            <person name="Kuroda H."/>
            <person name="Cui L."/>
            <person name="Yamamoto K."/>
            <person name="Hiramatsu K."/>
        </authorList>
    </citation>
    <scope>NUCLEOTIDE SEQUENCE [LARGE SCALE GENOMIC DNA]</scope>
    <source>
        <strain>MW2</strain>
    </source>
</reference>
<name>FEMX_STAAW</name>
<proteinExistence type="inferred from homology"/>
<sequence>MEKMHITNQEHDAFVKSHPNGDLLQLTKWAETKKLTGWYARRIAVGRDGEVQGVAQLLFKKVPKLPYTLCYISRGFVVDYSNKEALNALLDSAKEIAKAEKAYAIKIDPDVEVDKGTDALQNLKALGFKHKGFKEGLSKDYIQPRMTMITPIDKNDDELLNSFERRNRSKVRLALKRGTTVERSDREGLKTFAELMKITGERDGFLTRDISYFENIYDALHEDGDAELFLVKLDPKENIAKVNQELNELHAEIAKWQQKMETSEKQAKKAQNMINDAQNKIAKNEDLKRDLEALEKEHPEGIYLSGALLMFAGSKSYYLYGASSNEFRDFLPNHHMQYTMMKYAREHGATTYDFGGTDNDPDKDSEHYGLWAFKKVWGTYLSEKIGEFDYVLNQPLYQLIEQVKPRLTKAKIKISRKLKRK</sequence>
<feature type="chain" id="PRO_0000236175" description="Lipid II:glycine glycyltransferase">
    <location>
        <begin position="1"/>
        <end position="421"/>
    </location>
</feature>
<organism>
    <name type="scientific">Staphylococcus aureus (strain MW2)</name>
    <dbReference type="NCBI Taxonomy" id="196620"/>
    <lineage>
        <taxon>Bacteria</taxon>
        <taxon>Bacillati</taxon>
        <taxon>Bacillota</taxon>
        <taxon>Bacilli</taxon>
        <taxon>Bacillales</taxon>
        <taxon>Staphylococcaceae</taxon>
        <taxon>Staphylococcus</taxon>
    </lineage>
</organism>
<dbReference type="EC" id="2.3.2.16"/>
<dbReference type="EMBL" id="BA000033">
    <property type="protein sequence ID" value="BAB96045.1"/>
    <property type="molecule type" value="Genomic_DNA"/>
</dbReference>
<dbReference type="RefSeq" id="WP_000413863.1">
    <property type="nucleotide sequence ID" value="NC_003923.1"/>
</dbReference>
<dbReference type="SMR" id="Q8NVA9"/>
<dbReference type="KEGG" id="sam:MW2180"/>
<dbReference type="HOGENOM" id="CLU_048411_0_1_9"/>
<dbReference type="GO" id="GO:0005737">
    <property type="term" value="C:cytoplasm"/>
    <property type="evidence" value="ECO:0007669"/>
    <property type="project" value="UniProtKB-SubCell"/>
</dbReference>
<dbReference type="GO" id="GO:0016755">
    <property type="term" value="F:aminoacyltransferase activity"/>
    <property type="evidence" value="ECO:0007669"/>
    <property type="project" value="InterPro"/>
</dbReference>
<dbReference type="GO" id="GO:0071555">
    <property type="term" value="P:cell wall organization"/>
    <property type="evidence" value="ECO:0007669"/>
    <property type="project" value="UniProtKB-KW"/>
</dbReference>
<dbReference type="GO" id="GO:0009252">
    <property type="term" value="P:peptidoglycan biosynthetic process"/>
    <property type="evidence" value="ECO:0007669"/>
    <property type="project" value="UniProtKB-KW"/>
</dbReference>
<dbReference type="GO" id="GO:0008360">
    <property type="term" value="P:regulation of cell shape"/>
    <property type="evidence" value="ECO:0007669"/>
    <property type="project" value="UniProtKB-KW"/>
</dbReference>
<dbReference type="GO" id="GO:0046677">
    <property type="term" value="P:response to antibiotic"/>
    <property type="evidence" value="ECO:0007669"/>
    <property type="project" value="UniProtKB-KW"/>
</dbReference>
<dbReference type="Gene3D" id="1.20.58.90">
    <property type="match status" value="1"/>
</dbReference>
<dbReference type="Gene3D" id="3.40.630.30">
    <property type="match status" value="2"/>
</dbReference>
<dbReference type="InterPro" id="IPR016181">
    <property type="entry name" value="Acyl_CoA_acyltransferase"/>
</dbReference>
<dbReference type="InterPro" id="IPR003447">
    <property type="entry name" value="FEMABX"/>
</dbReference>
<dbReference type="InterPro" id="IPR050644">
    <property type="entry name" value="PG_Glycine_Bridge_Synth"/>
</dbReference>
<dbReference type="PANTHER" id="PTHR36174">
    <property type="entry name" value="LIPID II:GLYCINE GLYCYLTRANSFERASE"/>
    <property type="match status" value="1"/>
</dbReference>
<dbReference type="PANTHER" id="PTHR36174:SF1">
    <property type="entry name" value="LIPID II:GLYCINE GLYCYLTRANSFERASE"/>
    <property type="match status" value="1"/>
</dbReference>
<dbReference type="Pfam" id="PF02388">
    <property type="entry name" value="FemAB"/>
    <property type="match status" value="1"/>
</dbReference>
<dbReference type="SUPFAM" id="SSF55729">
    <property type="entry name" value="Acyl-CoA N-acyltransferases (Nat)"/>
    <property type="match status" value="2"/>
</dbReference>
<dbReference type="PROSITE" id="PS51191">
    <property type="entry name" value="FEMABX"/>
    <property type="match status" value="1"/>
</dbReference>
<evidence type="ECO:0000250" key="1"/>
<evidence type="ECO:0000305" key="2"/>
<gene>
    <name type="primary">femX</name>
    <name type="synonym">fmhB</name>
    <name type="ordered locus">MW2180</name>
</gene>